<evidence type="ECO:0000255" key="1">
    <source>
        <dbReference type="HAMAP-Rule" id="MF_00254"/>
    </source>
</evidence>
<name>SYGA_LEUCK</name>
<feature type="chain" id="PRO_1000101206" description="Glycine--tRNA ligase alpha subunit">
    <location>
        <begin position="1"/>
        <end position="314"/>
    </location>
</feature>
<keyword id="KW-0030">Aminoacyl-tRNA synthetase</keyword>
<keyword id="KW-0067">ATP-binding</keyword>
<keyword id="KW-0963">Cytoplasm</keyword>
<keyword id="KW-0436">Ligase</keyword>
<keyword id="KW-0547">Nucleotide-binding</keyword>
<keyword id="KW-0648">Protein biosynthesis</keyword>
<keyword id="KW-1185">Reference proteome</keyword>
<comment type="catalytic activity">
    <reaction evidence="1">
        <text>tRNA(Gly) + glycine + ATP = glycyl-tRNA(Gly) + AMP + diphosphate</text>
        <dbReference type="Rhea" id="RHEA:16013"/>
        <dbReference type="Rhea" id="RHEA-COMP:9664"/>
        <dbReference type="Rhea" id="RHEA-COMP:9683"/>
        <dbReference type="ChEBI" id="CHEBI:30616"/>
        <dbReference type="ChEBI" id="CHEBI:33019"/>
        <dbReference type="ChEBI" id="CHEBI:57305"/>
        <dbReference type="ChEBI" id="CHEBI:78442"/>
        <dbReference type="ChEBI" id="CHEBI:78522"/>
        <dbReference type="ChEBI" id="CHEBI:456215"/>
        <dbReference type="EC" id="6.1.1.14"/>
    </reaction>
</comment>
<comment type="subunit">
    <text evidence="1">Tetramer of two alpha and two beta subunits.</text>
</comment>
<comment type="subcellular location">
    <subcellularLocation>
        <location evidence="1">Cytoplasm</location>
    </subcellularLocation>
</comment>
<comment type="similarity">
    <text evidence="1">Belongs to the class-II aminoacyl-tRNA synthetase family.</text>
</comment>
<reference key="1">
    <citation type="journal article" date="2008" name="J. Bacteriol.">
        <title>Complete genome sequence of Leuconostoc citreum KM20.</title>
        <authorList>
            <person name="Kim J.F."/>
            <person name="Jeong H."/>
            <person name="Lee J.-S."/>
            <person name="Choi S.-H."/>
            <person name="Ha M."/>
            <person name="Hur C.-G."/>
            <person name="Kim J.-S."/>
            <person name="Lee S."/>
            <person name="Park H.-S."/>
            <person name="Park Y.-H."/>
            <person name="Oh T.K."/>
        </authorList>
    </citation>
    <scope>NUCLEOTIDE SEQUENCE [LARGE SCALE GENOMIC DNA]</scope>
    <source>
        <strain>KM20</strain>
    </source>
</reference>
<protein>
    <recommendedName>
        <fullName evidence="1">Glycine--tRNA ligase alpha subunit</fullName>
        <ecNumber evidence="1">6.1.1.14</ecNumber>
    </recommendedName>
    <alternativeName>
        <fullName evidence="1">Glycyl-tRNA synthetase alpha subunit</fullName>
        <shortName evidence="1">GlyRS</shortName>
    </alternativeName>
</protein>
<gene>
    <name evidence="1" type="primary">glyQ</name>
    <name type="ordered locus">LCK_00986</name>
</gene>
<dbReference type="EC" id="6.1.1.14" evidence="1"/>
<dbReference type="EMBL" id="DQ489736">
    <property type="protein sequence ID" value="ACA82813.1"/>
    <property type="molecule type" value="Genomic_DNA"/>
</dbReference>
<dbReference type="RefSeq" id="WP_004906117.1">
    <property type="nucleotide sequence ID" value="NC_010471.1"/>
</dbReference>
<dbReference type="SMR" id="B1MZ61"/>
<dbReference type="STRING" id="349519.LCK_00986"/>
<dbReference type="KEGG" id="lci:LCK_00986"/>
<dbReference type="eggNOG" id="COG0752">
    <property type="taxonomic scope" value="Bacteria"/>
</dbReference>
<dbReference type="HOGENOM" id="CLU_057066_1_0_9"/>
<dbReference type="OrthoDB" id="9802183at2"/>
<dbReference type="Proteomes" id="UP000002166">
    <property type="component" value="Chromosome"/>
</dbReference>
<dbReference type="GO" id="GO:0005829">
    <property type="term" value="C:cytosol"/>
    <property type="evidence" value="ECO:0007669"/>
    <property type="project" value="TreeGrafter"/>
</dbReference>
<dbReference type="GO" id="GO:0005524">
    <property type="term" value="F:ATP binding"/>
    <property type="evidence" value="ECO:0007669"/>
    <property type="project" value="UniProtKB-UniRule"/>
</dbReference>
<dbReference type="GO" id="GO:0140096">
    <property type="term" value="F:catalytic activity, acting on a protein"/>
    <property type="evidence" value="ECO:0007669"/>
    <property type="project" value="UniProtKB-ARBA"/>
</dbReference>
<dbReference type="GO" id="GO:0004820">
    <property type="term" value="F:glycine-tRNA ligase activity"/>
    <property type="evidence" value="ECO:0007669"/>
    <property type="project" value="UniProtKB-UniRule"/>
</dbReference>
<dbReference type="GO" id="GO:0016740">
    <property type="term" value="F:transferase activity"/>
    <property type="evidence" value="ECO:0007669"/>
    <property type="project" value="UniProtKB-ARBA"/>
</dbReference>
<dbReference type="GO" id="GO:0006426">
    <property type="term" value="P:glycyl-tRNA aminoacylation"/>
    <property type="evidence" value="ECO:0007669"/>
    <property type="project" value="UniProtKB-UniRule"/>
</dbReference>
<dbReference type="FunFam" id="3.30.930.10:FF:000006">
    <property type="entry name" value="Glycine--tRNA ligase alpha subunit"/>
    <property type="match status" value="1"/>
</dbReference>
<dbReference type="Gene3D" id="3.30.930.10">
    <property type="entry name" value="Bira Bifunctional Protein, Domain 2"/>
    <property type="match status" value="1"/>
</dbReference>
<dbReference type="Gene3D" id="1.20.58.180">
    <property type="entry name" value="Class II aaRS and biotin synthetases, domain 2"/>
    <property type="match status" value="1"/>
</dbReference>
<dbReference type="HAMAP" id="MF_00254">
    <property type="entry name" value="Gly_tRNA_synth_alpha"/>
    <property type="match status" value="1"/>
</dbReference>
<dbReference type="InterPro" id="IPR045864">
    <property type="entry name" value="aa-tRNA-synth_II/BPL/LPL"/>
</dbReference>
<dbReference type="InterPro" id="IPR006194">
    <property type="entry name" value="Gly-tRNA-synth_heterodimer"/>
</dbReference>
<dbReference type="InterPro" id="IPR002310">
    <property type="entry name" value="Gly-tRNA_ligase_asu"/>
</dbReference>
<dbReference type="NCBIfam" id="TIGR00388">
    <property type="entry name" value="glyQ"/>
    <property type="match status" value="1"/>
</dbReference>
<dbReference type="NCBIfam" id="NF006827">
    <property type="entry name" value="PRK09348.1"/>
    <property type="match status" value="1"/>
</dbReference>
<dbReference type="PANTHER" id="PTHR30075:SF2">
    <property type="entry name" value="GLYCINE--TRNA LIGASE, CHLOROPLASTIC_MITOCHONDRIAL 2"/>
    <property type="match status" value="1"/>
</dbReference>
<dbReference type="PANTHER" id="PTHR30075">
    <property type="entry name" value="GLYCYL-TRNA SYNTHETASE"/>
    <property type="match status" value="1"/>
</dbReference>
<dbReference type="Pfam" id="PF02091">
    <property type="entry name" value="tRNA-synt_2e"/>
    <property type="match status" value="1"/>
</dbReference>
<dbReference type="PRINTS" id="PR01044">
    <property type="entry name" value="TRNASYNTHGA"/>
</dbReference>
<dbReference type="SUPFAM" id="SSF55681">
    <property type="entry name" value="Class II aaRS and biotin synthetases"/>
    <property type="match status" value="1"/>
</dbReference>
<dbReference type="PROSITE" id="PS50861">
    <property type="entry name" value="AA_TRNA_LIGASE_II_GLYAB"/>
    <property type="match status" value="1"/>
</dbReference>
<organism>
    <name type="scientific">Leuconostoc citreum (strain KM20)</name>
    <dbReference type="NCBI Taxonomy" id="349519"/>
    <lineage>
        <taxon>Bacteria</taxon>
        <taxon>Bacillati</taxon>
        <taxon>Bacillota</taxon>
        <taxon>Bacilli</taxon>
        <taxon>Lactobacillales</taxon>
        <taxon>Lactobacillaceae</taxon>
        <taxon>Leuconostoc</taxon>
    </lineage>
</organism>
<sequence length="314" mass="35856">MTSQKLSLQDIILTLQQYWANQGANLMQAYDNEVGAGTQSPYTFLRANGPEPWHAAYVQPSRRPADGRYGDNPNRLFQHHQFQVVMKPSPDNIQELYLGSLEALGIKPLEHDIRFVEDNWENPSMGAAGIGWEVWLDGMEVTQFTYFQQVGGIEVDSVTAEVTYGLERLASYIQDVPTVYDLDWGNGVLYGDIFKEPEYEHSKYAFEASDQAMLLRHFDDFEKEATRLLDLGLVHPAYDYILKSSHTFNLLDASGSVSVTERAGYLHRIRTMARRVSKVFIDERAKLGFPLLKDDDLREIYLGEHGKYTLTEEN</sequence>
<proteinExistence type="inferred from homology"/>
<accession>B1MZ61</accession>